<evidence type="ECO:0000255" key="1">
    <source>
        <dbReference type="HAMAP-Rule" id="MF_01037"/>
    </source>
</evidence>
<reference key="1">
    <citation type="journal article" date="2008" name="Genome Res.">
        <title>The genome of Pelotomaculum thermopropionicum reveals niche-associated evolution in anaerobic microbiota.</title>
        <authorList>
            <person name="Kosaka T."/>
            <person name="Kato S."/>
            <person name="Shimoyama T."/>
            <person name="Ishii S."/>
            <person name="Abe T."/>
            <person name="Watanabe K."/>
        </authorList>
    </citation>
    <scope>NUCLEOTIDE SEQUENCE [LARGE SCALE GENOMIC DNA]</scope>
    <source>
        <strain>DSM 13744 / JCM 10971 / SI</strain>
    </source>
</reference>
<dbReference type="EC" id="2.1.1.74" evidence="1"/>
<dbReference type="EMBL" id="AP009389">
    <property type="protein sequence ID" value="BAF59428.1"/>
    <property type="molecule type" value="Genomic_DNA"/>
</dbReference>
<dbReference type="SMR" id="A5D2W5"/>
<dbReference type="STRING" id="370438.PTH_1247"/>
<dbReference type="KEGG" id="pth:PTH_1247"/>
<dbReference type="eggNOG" id="COG1206">
    <property type="taxonomic scope" value="Bacteria"/>
</dbReference>
<dbReference type="HOGENOM" id="CLU_033057_1_0_9"/>
<dbReference type="Proteomes" id="UP000006556">
    <property type="component" value="Chromosome"/>
</dbReference>
<dbReference type="GO" id="GO:0005829">
    <property type="term" value="C:cytosol"/>
    <property type="evidence" value="ECO:0007669"/>
    <property type="project" value="TreeGrafter"/>
</dbReference>
<dbReference type="GO" id="GO:0050660">
    <property type="term" value="F:flavin adenine dinucleotide binding"/>
    <property type="evidence" value="ECO:0007669"/>
    <property type="project" value="UniProtKB-UniRule"/>
</dbReference>
<dbReference type="GO" id="GO:0047151">
    <property type="term" value="F:tRNA (uracil(54)-C5)-methyltransferase activity, 5,10-methylenetetrahydrofolate-dependent"/>
    <property type="evidence" value="ECO:0007669"/>
    <property type="project" value="UniProtKB-UniRule"/>
</dbReference>
<dbReference type="GO" id="GO:0030488">
    <property type="term" value="P:tRNA methylation"/>
    <property type="evidence" value="ECO:0007669"/>
    <property type="project" value="TreeGrafter"/>
</dbReference>
<dbReference type="GO" id="GO:0002098">
    <property type="term" value="P:tRNA wobble uridine modification"/>
    <property type="evidence" value="ECO:0007669"/>
    <property type="project" value="TreeGrafter"/>
</dbReference>
<dbReference type="FunFam" id="3.50.50.60:FF:000035">
    <property type="entry name" value="Methylenetetrahydrofolate--tRNA-(uracil-5-)-methyltransferase TrmFO"/>
    <property type="match status" value="1"/>
</dbReference>
<dbReference type="Gene3D" id="3.50.50.60">
    <property type="entry name" value="FAD/NAD(P)-binding domain"/>
    <property type="match status" value="2"/>
</dbReference>
<dbReference type="HAMAP" id="MF_01037">
    <property type="entry name" value="TrmFO"/>
    <property type="match status" value="1"/>
</dbReference>
<dbReference type="InterPro" id="IPR036188">
    <property type="entry name" value="FAD/NAD-bd_sf"/>
</dbReference>
<dbReference type="InterPro" id="IPR002218">
    <property type="entry name" value="MnmG-rel"/>
</dbReference>
<dbReference type="InterPro" id="IPR020595">
    <property type="entry name" value="MnmG-rel_CS"/>
</dbReference>
<dbReference type="InterPro" id="IPR040131">
    <property type="entry name" value="MnmG_N"/>
</dbReference>
<dbReference type="InterPro" id="IPR004417">
    <property type="entry name" value="TrmFO"/>
</dbReference>
<dbReference type="NCBIfam" id="TIGR00137">
    <property type="entry name" value="gid_trmFO"/>
    <property type="match status" value="1"/>
</dbReference>
<dbReference type="NCBIfam" id="NF003739">
    <property type="entry name" value="PRK05335.1"/>
    <property type="match status" value="1"/>
</dbReference>
<dbReference type="PANTHER" id="PTHR11806">
    <property type="entry name" value="GLUCOSE INHIBITED DIVISION PROTEIN A"/>
    <property type="match status" value="1"/>
</dbReference>
<dbReference type="PANTHER" id="PTHR11806:SF2">
    <property type="entry name" value="METHYLENETETRAHYDROFOLATE--TRNA-(URACIL-5-)-METHYLTRANSFERASE TRMFO"/>
    <property type="match status" value="1"/>
</dbReference>
<dbReference type="Pfam" id="PF01134">
    <property type="entry name" value="GIDA"/>
    <property type="match status" value="1"/>
</dbReference>
<dbReference type="PRINTS" id="PR00411">
    <property type="entry name" value="PNDRDTASEI"/>
</dbReference>
<dbReference type="SUPFAM" id="SSF51905">
    <property type="entry name" value="FAD/NAD(P)-binding domain"/>
    <property type="match status" value="1"/>
</dbReference>
<dbReference type="PROSITE" id="PS01281">
    <property type="entry name" value="GIDA_2"/>
    <property type="match status" value="1"/>
</dbReference>
<sequence>MTGRTVTVVGAGLAGAEAAWQAARRGIKVKLYEMRPEKLTPAHRSGYFAELVCSNSLRAAALENAVGLLKEEMRHLDSLVMACADVTSVPAGGALAVDRDLFARCVTERIAGNPLIEICREEVTAIPEGEAVIIATGPLTSDALASDISRFTGENCLFFYDAVAPIVAAESINMGKVFRSSRYGKGEAAYLNCPLSREEYEVFWEALVKAEKAPRKEFEKELHFEGCMPVEVLAARGKETLLYGPMKPVGLIDPRTGRRPYAVVQLRQENAAATLFNMVGFQTGLKWDEQKRVFRLIPGLEEAEFVRFGVMHRNTFINSPVLLHPTFQTRKNPALFFAGQITGVEGYVESAASGLMAGINAARLLAGKEPLVFPRNTAHGSLAHYITAADPAHFQPMNINFGLFPPFEARIRDKKERYRTVAKKALESIDRFKETLL</sequence>
<keyword id="KW-0963">Cytoplasm</keyword>
<keyword id="KW-0274">FAD</keyword>
<keyword id="KW-0285">Flavoprotein</keyword>
<keyword id="KW-0489">Methyltransferase</keyword>
<keyword id="KW-0520">NAD</keyword>
<keyword id="KW-0521">NADP</keyword>
<keyword id="KW-1185">Reference proteome</keyword>
<keyword id="KW-0808">Transferase</keyword>
<keyword id="KW-0819">tRNA processing</keyword>
<gene>
    <name evidence="1" type="primary">trmFO</name>
    <name type="synonym">gid</name>
    <name type="ordered locus">PTH_1247</name>
</gene>
<name>TRMFO_PELTS</name>
<feature type="chain" id="PRO_1000084289" description="Methylenetetrahydrofolate--tRNA-(uracil-5-)-methyltransferase TrmFO">
    <location>
        <begin position="1"/>
        <end position="437"/>
    </location>
</feature>
<feature type="binding site" evidence="1">
    <location>
        <begin position="10"/>
        <end position="15"/>
    </location>
    <ligand>
        <name>FAD</name>
        <dbReference type="ChEBI" id="CHEBI:57692"/>
    </ligand>
</feature>
<proteinExistence type="inferred from homology"/>
<comment type="function">
    <text evidence="1">Catalyzes the folate-dependent formation of 5-methyl-uridine at position 54 (M-5-U54) in all tRNAs.</text>
</comment>
<comment type="catalytic activity">
    <reaction evidence="1">
        <text>uridine(54) in tRNA + (6R)-5,10-methylene-5,6,7,8-tetrahydrofolate + NADH + H(+) = 5-methyluridine(54) in tRNA + (6S)-5,6,7,8-tetrahydrofolate + NAD(+)</text>
        <dbReference type="Rhea" id="RHEA:16873"/>
        <dbReference type="Rhea" id="RHEA-COMP:10167"/>
        <dbReference type="Rhea" id="RHEA-COMP:10193"/>
        <dbReference type="ChEBI" id="CHEBI:15378"/>
        <dbReference type="ChEBI" id="CHEBI:15636"/>
        <dbReference type="ChEBI" id="CHEBI:57453"/>
        <dbReference type="ChEBI" id="CHEBI:57540"/>
        <dbReference type="ChEBI" id="CHEBI:57945"/>
        <dbReference type="ChEBI" id="CHEBI:65315"/>
        <dbReference type="ChEBI" id="CHEBI:74447"/>
        <dbReference type="EC" id="2.1.1.74"/>
    </reaction>
</comment>
<comment type="catalytic activity">
    <reaction evidence="1">
        <text>uridine(54) in tRNA + (6R)-5,10-methylene-5,6,7,8-tetrahydrofolate + NADPH + H(+) = 5-methyluridine(54) in tRNA + (6S)-5,6,7,8-tetrahydrofolate + NADP(+)</text>
        <dbReference type="Rhea" id="RHEA:62372"/>
        <dbReference type="Rhea" id="RHEA-COMP:10167"/>
        <dbReference type="Rhea" id="RHEA-COMP:10193"/>
        <dbReference type="ChEBI" id="CHEBI:15378"/>
        <dbReference type="ChEBI" id="CHEBI:15636"/>
        <dbReference type="ChEBI" id="CHEBI:57453"/>
        <dbReference type="ChEBI" id="CHEBI:57783"/>
        <dbReference type="ChEBI" id="CHEBI:58349"/>
        <dbReference type="ChEBI" id="CHEBI:65315"/>
        <dbReference type="ChEBI" id="CHEBI:74447"/>
        <dbReference type="EC" id="2.1.1.74"/>
    </reaction>
</comment>
<comment type="cofactor">
    <cofactor evidence="1">
        <name>FAD</name>
        <dbReference type="ChEBI" id="CHEBI:57692"/>
    </cofactor>
</comment>
<comment type="subcellular location">
    <subcellularLocation>
        <location evidence="1">Cytoplasm</location>
    </subcellularLocation>
</comment>
<comment type="similarity">
    <text evidence="1">Belongs to the MnmG family. TrmFO subfamily.</text>
</comment>
<protein>
    <recommendedName>
        <fullName evidence="1">Methylenetetrahydrofolate--tRNA-(uracil-5-)-methyltransferase TrmFO</fullName>
        <ecNumber evidence="1">2.1.1.74</ecNumber>
    </recommendedName>
    <alternativeName>
        <fullName evidence="1">Folate-dependent tRNA (uracil-5-)-methyltransferase</fullName>
    </alternativeName>
    <alternativeName>
        <fullName evidence="1">Folate-dependent tRNA(M-5-U54)-methyltransferase</fullName>
    </alternativeName>
</protein>
<organism>
    <name type="scientific">Pelotomaculum thermopropionicum (strain DSM 13744 / JCM 10971 / SI)</name>
    <dbReference type="NCBI Taxonomy" id="370438"/>
    <lineage>
        <taxon>Bacteria</taxon>
        <taxon>Bacillati</taxon>
        <taxon>Bacillota</taxon>
        <taxon>Clostridia</taxon>
        <taxon>Eubacteriales</taxon>
        <taxon>Desulfotomaculaceae</taxon>
        <taxon>Pelotomaculum</taxon>
    </lineage>
</organism>
<accession>A5D2W5</accession>